<sequence length="511" mass="55001">MVKYMNLIVLGMLMFGVFVTLSLGSSTALTVYSPFPGEHVALINPKELILNISVYDPIAPVNSTVGVTISGPYDIKMTSAGVPVGELNSSHMLTVTDYAFPVTLFEANGTQISAFIPGQYNVTISVAGCSETIPIYVISPNEIEILVCVYSNGVPLPGATVSIYNVTNGELLLTNTTNSQGLAELTVPYVYTMTNEYNVTAVKPGYQLVYKEVTVPADHITPVTVKLTTKPITFVLTPVYFQDMGVIEPAEPAQLPGTPEPVYVASAYMGTTFSIIINATESGMPVQGATISASYLISGKQMSSTATYIGNGQYNLSIVLPNSTVPYDLELVITGTYQTNTYTFITLLSVQPNFYCEIQRLQSEVSVLESEVDQLKVEIQSLNETLTLQASEIASLKTYLEGNVSYFSMQISSLESEIKYLNSTLMTLSSELTTVNSTLTSEVNSLTSEVNSLSTQVSTLSTEVNNLNTTINNDNQKISSLTTLVYGGIILGVIALIIAIVAVVLVFRKVA</sequence>
<keyword id="KW-1003">Cell membrane</keyword>
<keyword id="KW-0134">Cell wall</keyword>
<keyword id="KW-0175">Coiled coil</keyword>
<keyword id="KW-0472">Membrane</keyword>
<keyword id="KW-0701">S-layer</keyword>
<keyword id="KW-0964">Secreted</keyword>
<keyword id="KW-0732">Signal</keyword>
<keyword id="KW-0812">Transmembrane</keyword>
<keyword id="KW-1133">Transmembrane helix</keyword>
<reference key="1">
    <citation type="journal article" date="2009" name="Mol. Microbiol.">
        <title>Acidianus, Sulfolobus and Metallosphaera surface layers: structure, composition and gene expression.</title>
        <authorList>
            <person name="Veith A."/>
            <person name="Klingl A."/>
            <person name="Zolghadr B."/>
            <person name="Lauber K."/>
            <person name="Mentele R."/>
            <person name="Lottspeich F."/>
            <person name="Rachel R."/>
            <person name="Albers S.V."/>
            <person name="Kletzin A."/>
        </authorList>
    </citation>
    <scope>NUCLEOTIDE SEQUENCE [GENOMIC DNA]</scope>
    <scope>FUNCTION</scope>
    <scope>SUBUNIT</scope>
    <scope>SUBCELLULAR LOCATION</scope>
    <scope>INDUCTION</scope>
    <source>
        <strain>Lei 10 / DSM 3772 / JCM 9191</strain>
    </source>
</reference>
<evidence type="ECO:0000255" key="1"/>
<evidence type="ECO:0000269" key="2">
    <source>
    </source>
</evidence>
<evidence type="ECO:0000303" key="3">
    <source>
    </source>
</evidence>
<evidence type="ECO:0000305" key="4"/>
<evidence type="ECO:0000305" key="5">
    <source>
    </source>
</evidence>
<name>SLAB_ACIAM</name>
<gene>
    <name evidence="3" type="primary">slaB</name>
</gene>
<feature type="signal peptide" evidence="1">
    <location>
        <begin position="1"/>
        <end position="24"/>
    </location>
</feature>
<feature type="chain" id="PRO_0000444053" description="S-layer protein B">
    <location>
        <begin position="25"/>
        <end position="511"/>
    </location>
</feature>
<feature type="transmembrane region" description="Helical" evidence="1">
    <location>
        <begin position="487"/>
        <end position="507"/>
    </location>
</feature>
<feature type="coiled-coil region" evidence="1">
    <location>
        <begin position="358"/>
        <end position="392"/>
    </location>
</feature>
<organism>
    <name type="scientific">Acidianus ambivalens</name>
    <name type="common">Desulfurolobus ambivalens</name>
    <dbReference type="NCBI Taxonomy" id="2283"/>
    <lineage>
        <taxon>Archaea</taxon>
        <taxon>Thermoproteota</taxon>
        <taxon>Thermoprotei</taxon>
        <taxon>Sulfolobales</taxon>
        <taxon>Sulfolobaceae</taxon>
        <taxon>Acidianus</taxon>
    </lineage>
</organism>
<accession>B1GT62</accession>
<proteinExistence type="evidence at protein level"/>
<dbReference type="EMBL" id="AM690769">
    <property type="protein sequence ID" value="CAM84438.1"/>
    <property type="molecule type" value="Genomic_DNA"/>
</dbReference>
<dbReference type="RefSeq" id="WP_152940441.1">
    <property type="nucleotide sequence ID" value="NZ_CP045482.1"/>
</dbReference>
<dbReference type="SMR" id="B1GT62"/>
<dbReference type="GeneID" id="42780662"/>
<dbReference type="GO" id="GO:0005576">
    <property type="term" value="C:extracellular region"/>
    <property type="evidence" value="ECO:0007669"/>
    <property type="project" value="UniProtKB-KW"/>
</dbReference>
<dbReference type="GO" id="GO:0005886">
    <property type="term" value="C:plasma membrane"/>
    <property type="evidence" value="ECO:0007669"/>
    <property type="project" value="UniProtKB-SubCell"/>
</dbReference>
<dbReference type="GO" id="GO:0030115">
    <property type="term" value="C:S-layer"/>
    <property type="evidence" value="ECO:0007669"/>
    <property type="project" value="UniProtKB-SubCell"/>
</dbReference>
<dbReference type="Gene3D" id="1.10.287.1490">
    <property type="match status" value="1"/>
</dbReference>
<dbReference type="Gene3D" id="2.60.40.1120">
    <property type="entry name" value="Carboxypeptidase-like, regulatory domain"/>
    <property type="match status" value="1"/>
</dbReference>
<dbReference type="Pfam" id="PF15905">
    <property type="entry name" value="HMMR_N"/>
    <property type="match status" value="1"/>
</dbReference>
<dbReference type="SUPFAM" id="SSF58100">
    <property type="entry name" value="Bacterial hemolysins"/>
    <property type="match status" value="1"/>
</dbReference>
<dbReference type="SUPFAM" id="SSF49478">
    <property type="entry name" value="Cna protein B-type domain"/>
    <property type="match status" value="1"/>
</dbReference>
<comment type="function">
    <text evidence="2">S-layer small protein. May anchor the complex to the cell membrane.</text>
</comment>
<comment type="subunit">
    <text evidence="5">The mushroom-shaped unit cells of the Sulfolobales' S-layers may consist of three SlaB subunits and six SlaA subunits.</text>
</comment>
<comment type="subcellular location">
    <subcellularLocation>
        <location evidence="5">Secreted</location>
        <location evidence="5">Cell wall</location>
        <location evidence="5">S-layer</location>
    </subcellularLocation>
    <subcellularLocation>
        <location evidence="1">Cell membrane</location>
        <topology evidence="1">Single-pass membrane protein</topology>
    </subcellularLocation>
</comment>
<comment type="induction">
    <text evidence="2">Constitutively expressed.</text>
</comment>
<comment type="similarity">
    <text evidence="4">Belongs to the Sulfolobales SlaB family.</text>
</comment>
<protein>
    <recommendedName>
        <fullName evidence="3">S-layer protein B</fullName>
    </recommendedName>
    <alternativeName>
        <fullName evidence="4">Surface layer small protein</fullName>
    </alternativeName>
</protein>